<comment type="function">
    <text evidence="1">Catalyzes the reversible isomerization of glucose-6-phosphate to fructose-6-phosphate.</text>
</comment>
<comment type="catalytic activity">
    <reaction evidence="1">
        <text>alpha-D-glucose 6-phosphate = beta-D-fructose 6-phosphate</text>
        <dbReference type="Rhea" id="RHEA:11816"/>
        <dbReference type="ChEBI" id="CHEBI:57634"/>
        <dbReference type="ChEBI" id="CHEBI:58225"/>
        <dbReference type="EC" id="5.3.1.9"/>
    </reaction>
</comment>
<comment type="pathway">
    <text evidence="1">Carbohydrate biosynthesis; gluconeogenesis.</text>
</comment>
<comment type="pathway">
    <text evidence="1">Carbohydrate degradation; glycolysis; D-glyceraldehyde 3-phosphate and glycerone phosphate from D-glucose: step 2/4.</text>
</comment>
<comment type="subcellular location">
    <subcellularLocation>
        <location evidence="1">Cytoplasm</location>
    </subcellularLocation>
</comment>
<comment type="similarity">
    <text evidence="1">Belongs to the GPI family.</text>
</comment>
<keyword id="KW-0963">Cytoplasm</keyword>
<keyword id="KW-0312">Gluconeogenesis</keyword>
<keyword id="KW-0324">Glycolysis</keyword>
<keyword id="KW-0413">Isomerase</keyword>
<reference key="1">
    <citation type="submission" date="2007-06" db="EMBL/GenBank/DDBJ databases">
        <title>Complete sequence of Marinomonas sp. MWYL1.</title>
        <authorList>
            <consortium name="US DOE Joint Genome Institute"/>
            <person name="Copeland A."/>
            <person name="Lucas S."/>
            <person name="Lapidus A."/>
            <person name="Barry K."/>
            <person name="Glavina del Rio T."/>
            <person name="Dalin E."/>
            <person name="Tice H."/>
            <person name="Pitluck S."/>
            <person name="Kiss H."/>
            <person name="Brettin T."/>
            <person name="Bruce D."/>
            <person name="Detter J.C."/>
            <person name="Han C."/>
            <person name="Schmutz J."/>
            <person name="Larimer F."/>
            <person name="Land M."/>
            <person name="Hauser L."/>
            <person name="Kyrpides N."/>
            <person name="Kim E."/>
            <person name="Johnston A.W.B."/>
            <person name="Todd J.D."/>
            <person name="Rogers R."/>
            <person name="Wexler M."/>
            <person name="Bond P.L."/>
            <person name="Li Y."/>
            <person name="Richardson P."/>
        </authorList>
    </citation>
    <scope>NUCLEOTIDE SEQUENCE [LARGE SCALE GENOMIC DNA]</scope>
    <source>
        <strain>MWYL1</strain>
    </source>
</reference>
<organism>
    <name type="scientific">Marinomonas sp. (strain MWYL1)</name>
    <dbReference type="NCBI Taxonomy" id="400668"/>
    <lineage>
        <taxon>Bacteria</taxon>
        <taxon>Pseudomonadati</taxon>
        <taxon>Pseudomonadota</taxon>
        <taxon>Gammaproteobacteria</taxon>
        <taxon>Oceanospirillales</taxon>
        <taxon>Oceanospirillaceae</taxon>
        <taxon>Marinomonas</taxon>
    </lineage>
</organism>
<sequence>MSSPTKLTAWQKLTEHKQEMASVSMKSLFEADPKRAEKYTTQAAGWTLDYAKNRANEKTLSLLTDLAKEAGLESAIKGMFSGAHINNTEDRSVLHIALRASQAQETLMVDGVNVLAEVRATLKQMEAFVTQLHNGEWKGYTGKRITDVISIGIGGSYLGPKVVAEALTPYKKDGIKVHFVANIDGSDITGKLKLVNPETTVFVISSKTFGTLETLSNANAARDWFLSNGGSQSDVSKHFAAVSSNVKKAVDFGMAEENIFPMWDWVGGRYSLWSAIGLPVAIAVGMDNFYELLDGAHQMDEHFRTTPFEENLPVIMGTLGVWYINFHNAQTHALIPYDHYLRAMPAHIQQLDMESNGKSTLLNGDGVETDTGPIIWGGAGTNGQHAYHQLLHQGTRLVPVDFIVPLASHNPIGEHHAQLFANCLSQSQALMVGKTLEQAQQELRDAGASPDQVEAIAPHKVIKGNRPSNTLLTDKMTPATVGALIALYEHRTFVQGTIWGINSFDQWGVELGKVLGTDIYNRLVSDSDNSALDASTQALIKAFKKAQA</sequence>
<feature type="chain" id="PRO_1000081241" description="Glucose-6-phosphate isomerase">
    <location>
        <begin position="1"/>
        <end position="548"/>
    </location>
</feature>
<feature type="active site" description="Proton donor" evidence="1">
    <location>
        <position position="354"/>
    </location>
</feature>
<feature type="active site" evidence="1">
    <location>
        <position position="385"/>
    </location>
</feature>
<feature type="active site" evidence="1">
    <location>
        <position position="513"/>
    </location>
</feature>
<proteinExistence type="inferred from homology"/>
<name>G6PI_MARMS</name>
<protein>
    <recommendedName>
        <fullName evidence="1">Glucose-6-phosphate isomerase</fullName>
        <shortName evidence="1">GPI</shortName>
        <ecNumber evidence="1">5.3.1.9</ecNumber>
    </recommendedName>
    <alternativeName>
        <fullName evidence="1">Phosphoglucose isomerase</fullName>
        <shortName evidence="1">PGI</shortName>
    </alternativeName>
    <alternativeName>
        <fullName evidence="1">Phosphohexose isomerase</fullName>
        <shortName evidence="1">PHI</shortName>
    </alternativeName>
</protein>
<accession>A6W2I5</accession>
<dbReference type="EC" id="5.3.1.9" evidence="1"/>
<dbReference type="EMBL" id="CP000749">
    <property type="protein sequence ID" value="ABR72914.1"/>
    <property type="molecule type" value="Genomic_DNA"/>
</dbReference>
<dbReference type="SMR" id="A6W2I5"/>
<dbReference type="STRING" id="400668.Mmwyl1_4018"/>
<dbReference type="KEGG" id="mmw:Mmwyl1_4018"/>
<dbReference type="eggNOG" id="COG0166">
    <property type="taxonomic scope" value="Bacteria"/>
</dbReference>
<dbReference type="HOGENOM" id="CLU_017947_3_1_6"/>
<dbReference type="OrthoDB" id="140919at2"/>
<dbReference type="UniPathway" id="UPA00109">
    <property type="reaction ID" value="UER00181"/>
</dbReference>
<dbReference type="UniPathway" id="UPA00138"/>
<dbReference type="GO" id="GO:0005829">
    <property type="term" value="C:cytosol"/>
    <property type="evidence" value="ECO:0007669"/>
    <property type="project" value="TreeGrafter"/>
</dbReference>
<dbReference type="GO" id="GO:0097367">
    <property type="term" value="F:carbohydrate derivative binding"/>
    <property type="evidence" value="ECO:0007669"/>
    <property type="project" value="InterPro"/>
</dbReference>
<dbReference type="GO" id="GO:0004347">
    <property type="term" value="F:glucose-6-phosphate isomerase activity"/>
    <property type="evidence" value="ECO:0007669"/>
    <property type="project" value="UniProtKB-UniRule"/>
</dbReference>
<dbReference type="GO" id="GO:0048029">
    <property type="term" value="F:monosaccharide binding"/>
    <property type="evidence" value="ECO:0007669"/>
    <property type="project" value="TreeGrafter"/>
</dbReference>
<dbReference type="GO" id="GO:0006094">
    <property type="term" value="P:gluconeogenesis"/>
    <property type="evidence" value="ECO:0007669"/>
    <property type="project" value="UniProtKB-UniRule"/>
</dbReference>
<dbReference type="GO" id="GO:0051156">
    <property type="term" value="P:glucose 6-phosphate metabolic process"/>
    <property type="evidence" value="ECO:0007669"/>
    <property type="project" value="TreeGrafter"/>
</dbReference>
<dbReference type="GO" id="GO:0006096">
    <property type="term" value="P:glycolytic process"/>
    <property type="evidence" value="ECO:0007669"/>
    <property type="project" value="UniProtKB-UniRule"/>
</dbReference>
<dbReference type="CDD" id="cd05015">
    <property type="entry name" value="SIS_PGI_1"/>
    <property type="match status" value="1"/>
</dbReference>
<dbReference type="CDD" id="cd05016">
    <property type="entry name" value="SIS_PGI_2"/>
    <property type="match status" value="1"/>
</dbReference>
<dbReference type="FunFam" id="3.40.50.10490:FF:000018">
    <property type="entry name" value="Glucose-6-phosphate isomerase"/>
    <property type="match status" value="1"/>
</dbReference>
<dbReference type="Gene3D" id="1.10.1390.10">
    <property type="match status" value="1"/>
</dbReference>
<dbReference type="Gene3D" id="3.40.50.10490">
    <property type="entry name" value="Glucose-6-phosphate isomerase like protein, domain 1"/>
    <property type="match status" value="2"/>
</dbReference>
<dbReference type="HAMAP" id="MF_00473">
    <property type="entry name" value="G6P_isomerase"/>
    <property type="match status" value="1"/>
</dbReference>
<dbReference type="InterPro" id="IPR001672">
    <property type="entry name" value="G6P_Isomerase"/>
</dbReference>
<dbReference type="InterPro" id="IPR023096">
    <property type="entry name" value="G6P_Isomerase_C"/>
</dbReference>
<dbReference type="InterPro" id="IPR018189">
    <property type="entry name" value="Phosphoglucose_isomerase_CS"/>
</dbReference>
<dbReference type="InterPro" id="IPR046348">
    <property type="entry name" value="SIS_dom_sf"/>
</dbReference>
<dbReference type="InterPro" id="IPR035476">
    <property type="entry name" value="SIS_PGI_1"/>
</dbReference>
<dbReference type="InterPro" id="IPR035482">
    <property type="entry name" value="SIS_PGI_2"/>
</dbReference>
<dbReference type="NCBIfam" id="NF001211">
    <property type="entry name" value="PRK00179.1"/>
    <property type="match status" value="1"/>
</dbReference>
<dbReference type="PANTHER" id="PTHR11469">
    <property type="entry name" value="GLUCOSE-6-PHOSPHATE ISOMERASE"/>
    <property type="match status" value="1"/>
</dbReference>
<dbReference type="PANTHER" id="PTHR11469:SF1">
    <property type="entry name" value="GLUCOSE-6-PHOSPHATE ISOMERASE"/>
    <property type="match status" value="1"/>
</dbReference>
<dbReference type="Pfam" id="PF00342">
    <property type="entry name" value="PGI"/>
    <property type="match status" value="1"/>
</dbReference>
<dbReference type="PRINTS" id="PR00662">
    <property type="entry name" value="G6PISOMERASE"/>
</dbReference>
<dbReference type="SUPFAM" id="SSF53697">
    <property type="entry name" value="SIS domain"/>
    <property type="match status" value="1"/>
</dbReference>
<dbReference type="PROSITE" id="PS00765">
    <property type="entry name" value="P_GLUCOSE_ISOMERASE_1"/>
    <property type="match status" value="1"/>
</dbReference>
<dbReference type="PROSITE" id="PS00174">
    <property type="entry name" value="P_GLUCOSE_ISOMERASE_2"/>
    <property type="match status" value="1"/>
</dbReference>
<dbReference type="PROSITE" id="PS51463">
    <property type="entry name" value="P_GLUCOSE_ISOMERASE_3"/>
    <property type="match status" value="1"/>
</dbReference>
<evidence type="ECO:0000255" key="1">
    <source>
        <dbReference type="HAMAP-Rule" id="MF_00473"/>
    </source>
</evidence>
<gene>
    <name evidence="1" type="primary">pgi</name>
    <name type="ordered locus">Mmwyl1_4018</name>
</gene>